<evidence type="ECO:0000255" key="1">
    <source>
        <dbReference type="HAMAP-Rule" id="MF_01320"/>
    </source>
</evidence>
<evidence type="ECO:0000256" key="2">
    <source>
        <dbReference type="SAM" id="MobiDB-lite"/>
    </source>
</evidence>
<evidence type="ECO:0000305" key="3"/>
<dbReference type="EMBL" id="AE002160">
    <property type="protein sequence ID" value="AAF39614.1"/>
    <property type="molecule type" value="Genomic_DNA"/>
</dbReference>
<dbReference type="PIR" id="A81661">
    <property type="entry name" value="A81661"/>
</dbReference>
<dbReference type="RefSeq" id="WP_010231643.1">
    <property type="nucleotide sequence ID" value="NZ_CP063055.1"/>
</dbReference>
<dbReference type="SMR" id="Q9PJL7"/>
<dbReference type="GeneID" id="1246179"/>
<dbReference type="KEGG" id="cmu:TC_0812"/>
<dbReference type="eggNOG" id="COG0090">
    <property type="taxonomic scope" value="Bacteria"/>
</dbReference>
<dbReference type="HOGENOM" id="CLU_036235_2_1_0"/>
<dbReference type="OrthoDB" id="9778722at2"/>
<dbReference type="Proteomes" id="UP000000800">
    <property type="component" value="Chromosome"/>
</dbReference>
<dbReference type="GO" id="GO:0015934">
    <property type="term" value="C:large ribosomal subunit"/>
    <property type="evidence" value="ECO:0007669"/>
    <property type="project" value="InterPro"/>
</dbReference>
<dbReference type="GO" id="GO:0019843">
    <property type="term" value="F:rRNA binding"/>
    <property type="evidence" value="ECO:0007669"/>
    <property type="project" value="UniProtKB-UniRule"/>
</dbReference>
<dbReference type="GO" id="GO:0003735">
    <property type="term" value="F:structural constituent of ribosome"/>
    <property type="evidence" value="ECO:0007669"/>
    <property type="project" value="InterPro"/>
</dbReference>
<dbReference type="GO" id="GO:0016740">
    <property type="term" value="F:transferase activity"/>
    <property type="evidence" value="ECO:0007669"/>
    <property type="project" value="InterPro"/>
</dbReference>
<dbReference type="GO" id="GO:0002181">
    <property type="term" value="P:cytoplasmic translation"/>
    <property type="evidence" value="ECO:0007669"/>
    <property type="project" value="TreeGrafter"/>
</dbReference>
<dbReference type="FunFam" id="2.30.30.30:FF:000001">
    <property type="entry name" value="50S ribosomal protein L2"/>
    <property type="match status" value="1"/>
</dbReference>
<dbReference type="FunFam" id="2.40.50.140:FF:000003">
    <property type="entry name" value="50S ribosomal protein L2"/>
    <property type="match status" value="1"/>
</dbReference>
<dbReference type="FunFam" id="4.10.950.10:FF:000001">
    <property type="entry name" value="50S ribosomal protein L2"/>
    <property type="match status" value="1"/>
</dbReference>
<dbReference type="Gene3D" id="2.30.30.30">
    <property type="match status" value="1"/>
</dbReference>
<dbReference type="Gene3D" id="2.40.50.140">
    <property type="entry name" value="Nucleic acid-binding proteins"/>
    <property type="match status" value="1"/>
</dbReference>
<dbReference type="Gene3D" id="4.10.950.10">
    <property type="entry name" value="Ribosomal protein L2, domain 3"/>
    <property type="match status" value="1"/>
</dbReference>
<dbReference type="HAMAP" id="MF_01320_B">
    <property type="entry name" value="Ribosomal_uL2_B"/>
    <property type="match status" value="1"/>
</dbReference>
<dbReference type="InterPro" id="IPR012340">
    <property type="entry name" value="NA-bd_OB-fold"/>
</dbReference>
<dbReference type="InterPro" id="IPR014722">
    <property type="entry name" value="Rib_uL2_dom2"/>
</dbReference>
<dbReference type="InterPro" id="IPR002171">
    <property type="entry name" value="Ribosomal_uL2"/>
</dbReference>
<dbReference type="InterPro" id="IPR005880">
    <property type="entry name" value="Ribosomal_uL2_bac/org-type"/>
</dbReference>
<dbReference type="InterPro" id="IPR022669">
    <property type="entry name" value="Ribosomal_uL2_C"/>
</dbReference>
<dbReference type="InterPro" id="IPR022671">
    <property type="entry name" value="Ribosomal_uL2_CS"/>
</dbReference>
<dbReference type="InterPro" id="IPR014726">
    <property type="entry name" value="Ribosomal_uL2_dom3"/>
</dbReference>
<dbReference type="InterPro" id="IPR022666">
    <property type="entry name" value="Ribosomal_uL2_RNA-bd_dom"/>
</dbReference>
<dbReference type="InterPro" id="IPR008991">
    <property type="entry name" value="Translation_prot_SH3-like_sf"/>
</dbReference>
<dbReference type="NCBIfam" id="TIGR01171">
    <property type="entry name" value="rplB_bact"/>
    <property type="match status" value="1"/>
</dbReference>
<dbReference type="PANTHER" id="PTHR13691:SF5">
    <property type="entry name" value="LARGE RIBOSOMAL SUBUNIT PROTEIN UL2M"/>
    <property type="match status" value="1"/>
</dbReference>
<dbReference type="PANTHER" id="PTHR13691">
    <property type="entry name" value="RIBOSOMAL PROTEIN L2"/>
    <property type="match status" value="1"/>
</dbReference>
<dbReference type="Pfam" id="PF00181">
    <property type="entry name" value="Ribosomal_L2"/>
    <property type="match status" value="1"/>
</dbReference>
<dbReference type="Pfam" id="PF03947">
    <property type="entry name" value="Ribosomal_L2_C"/>
    <property type="match status" value="1"/>
</dbReference>
<dbReference type="PIRSF" id="PIRSF002158">
    <property type="entry name" value="Ribosomal_L2"/>
    <property type="match status" value="1"/>
</dbReference>
<dbReference type="SMART" id="SM01383">
    <property type="entry name" value="Ribosomal_L2"/>
    <property type="match status" value="1"/>
</dbReference>
<dbReference type="SMART" id="SM01382">
    <property type="entry name" value="Ribosomal_L2_C"/>
    <property type="match status" value="1"/>
</dbReference>
<dbReference type="SUPFAM" id="SSF50249">
    <property type="entry name" value="Nucleic acid-binding proteins"/>
    <property type="match status" value="1"/>
</dbReference>
<dbReference type="SUPFAM" id="SSF50104">
    <property type="entry name" value="Translation proteins SH3-like domain"/>
    <property type="match status" value="1"/>
</dbReference>
<dbReference type="PROSITE" id="PS00467">
    <property type="entry name" value="RIBOSOMAL_L2"/>
    <property type="match status" value="1"/>
</dbReference>
<name>RL2_CHLMU</name>
<gene>
    <name evidence="1" type="primary">rplB</name>
    <name type="ordered locus">TC_0812</name>
</gene>
<accession>Q9PJL7</accession>
<keyword id="KW-0687">Ribonucleoprotein</keyword>
<keyword id="KW-0689">Ribosomal protein</keyword>
<keyword id="KW-0694">RNA-binding</keyword>
<keyword id="KW-0699">rRNA-binding</keyword>
<reference key="1">
    <citation type="journal article" date="2000" name="Nucleic Acids Res.">
        <title>Genome sequences of Chlamydia trachomatis MoPn and Chlamydia pneumoniae AR39.</title>
        <authorList>
            <person name="Read T.D."/>
            <person name="Brunham R.C."/>
            <person name="Shen C."/>
            <person name="Gill S.R."/>
            <person name="Heidelberg J.F."/>
            <person name="White O."/>
            <person name="Hickey E.K."/>
            <person name="Peterson J.D."/>
            <person name="Utterback T.R."/>
            <person name="Berry K.J."/>
            <person name="Bass S."/>
            <person name="Linher K.D."/>
            <person name="Weidman J.F."/>
            <person name="Khouri H.M."/>
            <person name="Craven B."/>
            <person name="Bowman C."/>
            <person name="Dodson R.J."/>
            <person name="Gwinn M.L."/>
            <person name="Nelson W.C."/>
            <person name="DeBoy R.T."/>
            <person name="Kolonay J.F."/>
            <person name="McClarty G."/>
            <person name="Salzberg S.L."/>
            <person name="Eisen J.A."/>
            <person name="Fraser C.M."/>
        </authorList>
    </citation>
    <scope>NUCLEOTIDE SEQUENCE [LARGE SCALE GENOMIC DNA]</scope>
    <source>
        <strain>MoPn / Nigg</strain>
    </source>
</reference>
<feature type="chain" id="PRO_0000129546" description="Large ribosomal subunit protein uL2">
    <location>
        <begin position="1"/>
        <end position="284"/>
    </location>
</feature>
<feature type="region of interest" description="Disordered" evidence="2">
    <location>
        <begin position="28"/>
        <end position="50"/>
    </location>
</feature>
<feature type="region of interest" description="Disordered" evidence="2">
    <location>
        <begin position="232"/>
        <end position="284"/>
    </location>
</feature>
<feature type="compositionally biased region" description="Basic residues" evidence="2">
    <location>
        <begin position="36"/>
        <end position="46"/>
    </location>
</feature>
<feature type="compositionally biased region" description="Basic and acidic residues" evidence="2">
    <location>
        <begin position="240"/>
        <end position="250"/>
    </location>
</feature>
<feature type="compositionally biased region" description="Basic residues" evidence="2">
    <location>
        <begin position="264"/>
        <end position="284"/>
    </location>
</feature>
<comment type="function">
    <text evidence="1">One of the primary rRNA binding proteins. Required for association of the 30S and 50S subunits to form the 70S ribosome, for tRNA binding and peptide bond formation. It has been suggested to have peptidyltransferase activity; this is somewhat controversial. Makes several contacts with the 16S rRNA in the 70S ribosome.</text>
</comment>
<comment type="subunit">
    <text evidence="1">Part of the 50S ribosomal subunit. Forms a bridge to the 30S subunit in the 70S ribosome.</text>
</comment>
<comment type="similarity">
    <text evidence="1">Belongs to the universal ribosomal protein uL2 family.</text>
</comment>
<sequence>MFKKFKPVTPGTRQLILPSFDELTTQGELEGSSSKRSVRPNKKLSFFKKSSGGRDNLGHISCRHRGGGVRRHYRVIDFKRNKDGVEAKVASVEYDPNRSAYIALLNYVDGEKRYILAPKGIKRGDRVISGEGSPFKTGCCMTLKSIPLGISVHNVEMRPGSGGKLVRSAGLSAQIIAKTDGYVTLKMPSGEFRMLNEMCRATVGEVSNADHNLCVDGKAGRRRWKGIRPTVRGTAMNPVDHPHGGGEGRHNGYISQTPWGKVTKGLKTRDKRKSNKWIVKDRRK</sequence>
<protein>
    <recommendedName>
        <fullName evidence="1">Large ribosomal subunit protein uL2</fullName>
    </recommendedName>
    <alternativeName>
        <fullName evidence="3">50S ribosomal protein L2</fullName>
    </alternativeName>
</protein>
<organism>
    <name type="scientific">Chlamydia muridarum (strain MoPn / Nigg)</name>
    <dbReference type="NCBI Taxonomy" id="243161"/>
    <lineage>
        <taxon>Bacteria</taxon>
        <taxon>Pseudomonadati</taxon>
        <taxon>Chlamydiota</taxon>
        <taxon>Chlamydiia</taxon>
        <taxon>Chlamydiales</taxon>
        <taxon>Chlamydiaceae</taxon>
        <taxon>Chlamydia/Chlamydophila group</taxon>
        <taxon>Chlamydia</taxon>
    </lineage>
</organism>
<proteinExistence type="inferred from homology"/>